<organism>
    <name type="scientific">Staphylococcus aureus</name>
    <dbReference type="NCBI Taxonomy" id="1280"/>
    <lineage>
        <taxon>Bacteria</taxon>
        <taxon>Bacillati</taxon>
        <taxon>Bacillota</taxon>
        <taxon>Bacilli</taxon>
        <taxon>Bacillales</taxon>
        <taxon>Staphylococcaceae</taxon>
        <taxon>Staphylococcus</taxon>
    </lineage>
</organism>
<keyword id="KW-0002">3D-structure</keyword>
<keyword id="KW-0903">Direct protein sequencing</keyword>
<keyword id="KW-0655">Prothrombin activator</keyword>
<keyword id="KW-0677">Repeat</keyword>
<keyword id="KW-0732">Signal</keyword>
<accession>P17855</accession>
<proteinExistence type="evidence at protein level"/>
<protein>
    <recommendedName>
        <fullName>Staphylocoagulase</fullName>
    </recommendedName>
</protein>
<comment type="function">
    <text>Staphylocoagulase is an extracellular protein which specifically forms a complex with human prothrombin. This complex named staphylothrombin can clot fibrinogen without any proteolytic cleavage of prothrombin.</text>
</comment>
<comment type="domain">
    <text>The C-terminal tandem repeats are not required for the procoagulant activity.</text>
</comment>
<comment type="similarity">
    <text evidence="2">Belongs to the staphylocoagulase family.</text>
</comment>
<feature type="signal peptide">
    <location>
        <begin position="1"/>
        <end position="26"/>
    </location>
</feature>
<feature type="chain" id="PRO_0000022425" description="Staphylocoagulase">
    <location>
        <begin position="27"/>
        <end position="715"/>
    </location>
</feature>
<feature type="repeat" description="1">
    <location>
        <begin position="495"/>
        <end position="521"/>
    </location>
</feature>
<feature type="repeat" description="2">
    <location>
        <begin position="522"/>
        <end position="548"/>
    </location>
</feature>
<feature type="repeat" description="3">
    <location>
        <begin position="549"/>
        <end position="575"/>
    </location>
</feature>
<feature type="repeat" description="4">
    <location>
        <begin position="576"/>
        <end position="602"/>
    </location>
</feature>
<feature type="repeat" description="5">
    <location>
        <begin position="603"/>
        <end position="629"/>
    </location>
</feature>
<feature type="repeat" description="6">
    <location>
        <begin position="630"/>
        <end position="656"/>
    </location>
</feature>
<feature type="repeat" description="7">
    <location>
        <begin position="657"/>
        <end position="683"/>
    </location>
</feature>
<feature type="repeat" description="8">
    <location>
        <begin position="684"/>
        <end position="710"/>
    </location>
</feature>
<feature type="region of interest" description="Disordered" evidence="1">
    <location>
        <begin position="306"/>
        <end position="348"/>
    </location>
</feature>
<feature type="region of interest" description="Disordered" evidence="1">
    <location>
        <begin position="430"/>
        <end position="470"/>
    </location>
</feature>
<feature type="region of interest" description="8 X 27 AA tandem repeats of A-R-P-[RT]-[FQY]-[NK]-K-[PA]-S-[EK]-T-N-A-Y-N-V-T-T-[NH]-[QAG]-[DN]-G-[TQ]-[VA]-[ST]-Y-G">
    <location>
        <begin position="495"/>
        <end position="710"/>
    </location>
</feature>
<feature type="region of interest" description="Disordered" evidence="1">
    <location>
        <begin position="674"/>
        <end position="697"/>
    </location>
</feature>
<feature type="compositionally biased region" description="Basic and acidic residues" evidence="1">
    <location>
        <begin position="306"/>
        <end position="327"/>
    </location>
</feature>
<feature type="compositionally biased region" description="Polar residues" evidence="1">
    <location>
        <begin position="431"/>
        <end position="443"/>
    </location>
</feature>
<feature type="turn" evidence="3">
    <location>
        <begin position="41"/>
        <end position="44"/>
    </location>
</feature>
<feature type="helix" evidence="3">
    <location>
        <begin position="50"/>
        <end position="72"/>
    </location>
</feature>
<feature type="helix" evidence="3">
    <location>
        <begin position="74"/>
        <end position="76"/>
    </location>
</feature>
<feature type="turn" evidence="3">
    <location>
        <begin position="79"/>
        <end position="81"/>
    </location>
</feature>
<feature type="helix" evidence="3">
    <location>
        <begin position="82"/>
        <end position="118"/>
    </location>
</feature>
<feature type="turn" evidence="3">
    <location>
        <begin position="132"/>
        <end position="134"/>
    </location>
</feature>
<feature type="helix" evidence="3">
    <location>
        <begin position="142"/>
        <end position="168"/>
    </location>
</feature>
<feature type="helix" evidence="3">
    <location>
        <begin position="171"/>
        <end position="173"/>
    </location>
</feature>
<feature type="helix" evidence="3">
    <location>
        <begin position="178"/>
        <end position="203"/>
    </location>
</feature>
<feature type="turn" evidence="3">
    <location>
        <begin position="206"/>
        <end position="208"/>
    </location>
</feature>
<feature type="helix" evidence="3">
    <location>
        <begin position="209"/>
        <end position="223"/>
    </location>
</feature>
<feature type="strand" evidence="3">
    <location>
        <begin position="226"/>
        <end position="228"/>
    </location>
</feature>
<feature type="helix" evidence="3">
    <location>
        <begin position="235"/>
        <end position="256"/>
    </location>
</feature>
<feature type="turn" evidence="3">
    <location>
        <begin position="269"/>
        <end position="271"/>
    </location>
</feature>
<feature type="turn" evidence="3">
    <location>
        <begin position="274"/>
        <end position="276"/>
    </location>
</feature>
<feature type="helix" evidence="3">
    <location>
        <begin position="278"/>
        <end position="294"/>
    </location>
</feature>
<feature type="helix" evidence="3">
    <location>
        <begin position="299"/>
        <end position="301"/>
    </location>
</feature>
<sequence length="715" mass="80100">MKKQIISLGALAVASSLFTWDNKADAIVTKDYSKESRVNENSKYGTLISDWYLKGRLTSLESQFINALDILETYHYGEKEYKDAKDKLMTRILGEDQYLLERKKVQYEEYKKLYQKYKEENPTSKGLKLKTFDQYTIEDLTMREYNELTESLKSAVKDFEKDVEKIENQHHDLKPFTDEMEEKATSRVDDLANKAYSVYFAFVRDTQHKTEALELKAKVDLVLGDEDKPHRISNERIEKEMIKDLESIIEDFFIETGLNKPGNITSYDSSKHHYKNHSEGFEALVKETREAVANADESWKTKTVKKYGESETKSPVVKEENKVEDPQSPKFDNQQEVKTTAGKAEETTQPVAQPLVKIPQGTITGEIVKGPEYPTMENKTLQGEIVQGPDFPTMEQSGPSLSDNYTQPTTPNPILEGLEGSSSKLEIKPQGTESTLKGIQGESSDIEVKPQATETTEASQYGPRPQFNKTPKYVKYRDAGTGIREYNDGTFGYEARPRFNKPSETNAYNVTTNQDGTVSYGARPTQNKASETNAYNVTTHANGQVSYGARPTQKKPSETNAYNVTTHANGQVSYGARPTYNKPSETNAYNVTTHGNGQVSYGARPTYKKPSKTNAYNVTTHANGQVSYGARPTQNKPSETNAYNVTTHANGQVSYGARPTQNKPSETNAYNVTTHGNGQVSYGARPTYNKPSKTNAYNVTTHADGTATYGPRVTK</sequence>
<dbReference type="EMBL" id="D00184">
    <property type="protein sequence ID" value="BAA00126.1"/>
    <property type="molecule type" value="Genomic_DNA"/>
</dbReference>
<dbReference type="PIR" id="A41511">
    <property type="entry name" value="A41511"/>
</dbReference>
<dbReference type="PDB" id="2A1D">
    <property type="method" value="X-ray"/>
    <property type="resolution" value="3.50 A"/>
    <property type="chains" value="D/H=27-355"/>
</dbReference>
<dbReference type="PDBsum" id="2A1D"/>
<dbReference type="SMR" id="P17855"/>
<dbReference type="EvolutionaryTrace" id="P17855"/>
<dbReference type="GO" id="GO:0016504">
    <property type="term" value="F:peptidase activator activity"/>
    <property type="evidence" value="ECO:0007669"/>
    <property type="project" value="UniProtKB-KW"/>
</dbReference>
<dbReference type="Gene3D" id="1.20.120.750">
    <property type="entry name" value="Staphylcoagulase, helix bundle domain 1"/>
    <property type="match status" value="1"/>
</dbReference>
<dbReference type="Gene3D" id="1.20.120.760">
    <property type="entry name" value="Staphylcoagulase, helix bundle, domain 2"/>
    <property type="match status" value="1"/>
</dbReference>
<dbReference type="InterPro" id="IPR043072">
    <property type="entry name" value="Staphylcoagulase_N_1"/>
</dbReference>
<dbReference type="InterPro" id="IPR043071">
    <property type="entry name" value="Staphylcoagulase_N_2"/>
</dbReference>
<dbReference type="InterPro" id="IPR001443">
    <property type="entry name" value="Staphylcoagulase_rpt"/>
</dbReference>
<dbReference type="InterPro" id="IPR014874">
    <property type="entry name" value="Staphylocoagulase_N"/>
</dbReference>
<dbReference type="NCBIfam" id="NF035921">
    <property type="entry name" value="staph_coagu"/>
    <property type="match status" value="1"/>
</dbReference>
<dbReference type="Pfam" id="PF08764">
    <property type="entry name" value="Coagulase"/>
    <property type="match status" value="1"/>
</dbReference>
<dbReference type="Pfam" id="PF04022">
    <property type="entry name" value="Staphylcoagulse"/>
    <property type="match status" value="8"/>
</dbReference>
<dbReference type="SUPFAM" id="SSF101094">
    <property type="entry name" value="Staphylocoagulase"/>
    <property type="match status" value="2"/>
</dbReference>
<dbReference type="PROSITE" id="PS00429">
    <property type="entry name" value="STAPHYLOCOAGULASE"/>
    <property type="match status" value="8"/>
</dbReference>
<evidence type="ECO:0000256" key="1">
    <source>
        <dbReference type="SAM" id="MobiDB-lite"/>
    </source>
</evidence>
<evidence type="ECO:0000305" key="2"/>
<evidence type="ECO:0007829" key="3">
    <source>
        <dbReference type="PDB" id="2A1D"/>
    </source>
</evidence>
<name>STC2_STAAU</name>
<reference key="1">
    <citation type="journal article" date="1987" name="J. Biochem.">
        <title>Nucleotide sequence of the staphylocoagulase gene: its unique COOH-terminal 8 tandem repeats.</title>
        <authorList>
            <person name="Kaida S."/>
            <person name="Miyata T."/>
            <person name="Yoshizawa Y."/>
            <person name="Kawabata S."/>
            <person name="Morita T."/>
            <person name="Igarashi H."/>
            <person name="Iwanaga S."/>
        </authorList>
    </citation>
    <scope>NUCLEOTIDE SEQUENCE [GENOMIC DNA]</scope>
    <scope>PARTIAL PROTEIN SEQUENCE</scope>
    <source>
        <strain>BB</strain>
    </source>
</reference>